<feature type="chain" id="PRO_0000362867" description="NAD(P)H-quinone oxidoreductase subunit 3, chloroplastic">
    <location>
        <begin position="1"/>
        <end position="120"/>
    </location>
</feature>
<feature type="transmembrane region" description="Helical" evidence="1">
    <location>
        <begin position="9"/>
        <end position="29"/>
    </location>
</feature>
<feature type="transmembrane region" description="Helical" evidence="1">
    <location>
        <begin position="64"/>
        <end position="84"/>
    </location>
</feature>
<feature type="transmembrane region" description="Helical" evidence="1">
    <location>
        <begin position="88"/>
        <end position="108"/>
    </location>
</feature>
<geneLocation type="chloroplast"/>
<comment type="function">
    <text evidence="1">NDH shuttles electrons from NAD(P)H:plastoquinone, via FMN and iron-sulfur (Fe-S) centers, to quinones in the photosynthetic chain and possibly in a chloroplast respiratory chain. The immediate electron acceptor for the enzyme in this species is believed to be plastoquinone. Couples the redox reaction to proton translocation, and thus conserves the redox energy in a proton gradient.</text>
</comment>
<comment type="catalytic activity">
    <reaction evidence="1">
        <text>a plastoquinone + NADH + (n+1) H(+)(in) = a plastoquinol + NAD(+) + n H(+)(out)</text>
        <dbReference type="Rhea" id="RHEA:42608"/>
        <dbReference type="Rhea" id="RHEA-COMP:9561"/>
        <dbReference type="Rhea" id="RHEA-COMP:9562"/>
        <dbReference type="ChEBI" id="CHEBI:15378"/>
        <dbReference type="ChEBI" id="CHEBI:17757"/>
        <dbReference type="ChEBI" id="CHEBI:57540"/>
        <dbReference type="ChEBI" id="CHEBI:57945"/>
        <dbReference type="ChEBI" id="CHEBI:62192"/>
    </reaction>
</comment>
<comment type="catalytic activity">
    <reaction evidence="1">
        <text>a plastoquinone + NADPH + (n+1) H(+)(in) = a plastoquinol + NADP(+) + n H(+)(out)</text>
        <dbReference type="Rhea" id="RHEA:42612"/>
        <dbReference type="Rhea" id="RHEA-COMP:9561"/>
        <dbReference type="Rhea" id="RHEA-COMP:9562"/>
        <dbReference type="ChEBI" id="CHEBI:15378"/>
        <dbReference type="ChEBI" id="CHEBI:17757"/>
        <dbReference type="ChEBI" id="CHEBI:57783"/>
        <dbReference type="ChEBI" id="CHEBI:58349"/>
        <dbReference type="ChEBI" id="CHEBI:62192"/>
    </reaction>
</comment>
<comment type="subunit">
    <text evidence="1">NDH is composed of at least 16 different subunits, 5 of which are encoded in the nucleus.</text>
</comment>
<comment type="subcellular location">
    <subcellularLocation>
        <location evidence="1">Plastid</location>
        <location evidence="1">Chloroplast thylakoid membrane</location>
        <topology evidence="1">Multi-pass membrane protein</topology>
    </subcellularLocation>
</comment>
<comment type="similarity">
    <text evidence="1">Belongs to the complex I subunit 3 family.</text>
</comment>
<dbReference type="EC" id="7.1.1.-" evidence="1"/>
<dbReference type="EMBL" id="DQ923116">
    <property type="protein sequence ID" value="ABI49783.1"/>
    <property type="molecule type" value="Genomic_DNA"/>
</dbReference>
<dbReference type="RefSeq" id="YP_740570.1">
    <property type="nucleotide sequence ID" value="NC_008335.1"/>
</dbReference>
<dbReference type="SMR" id="Q09G41"/>
<dbReference type="GeneID" id="4271341"/>
<dbReference type="GO" id="GO:0009535">
    <property type="term" value="C:chloroplast thylakoid membrane"/>
    <property type="evidence" value="ECO:0007669"/>
    <property type="project" value="UniProtKB-SubCell"/>
</dbReference>
<dbReference type="GO" id="GO:0030964">
    <property type="term" value="C:NADH dehydrogenase complex"/>
    <property type="evidence" value="ECO:0007669"/>
    <property type="project" value="TreeGrafter"/>
</dbReference>
<dbReference type="GO" id="GO:0008137">
    <property type="term" value="F:NADH dehydrogenase (ubiquinone) activity"/>
    <property type="evidence" value="ECO:0007669"/>
    <property type="project" value="InterPro"/>
</dbReference>
<dbReference type="GO" id="GO:0048038">
    <property type="term" value="F:quinone binding"/>
    <property type="evidence" value="ECO:0007669"/>
    <property type="project" value="UniProtKB-KW"/>
</dbReference>
<dbReference type="GO" id="GO:0019684">
    <property type="term" value="P:photosynthesis, light reaction"/>
    <property type="evidence" value="ECO:0007669"/>
    <property type="project" value="UniProtKB-UniRule"/>
</dbReference>
<dbReference type="FunFam" id="1.20.58.1610:FF:000001">
    <property type="entry name" value="NAD(P)H-quinone oxidoreductase subunit 3, chloroplastic"/>
    <property type="match status" value="1"/>
</dbReference>
<dbReference type="Gene3D" id="1.20.58.1610">
    <property type="entry name" value="NADH:ubiquinone/plastoquinone oxidoreductase, chain 3"/>
    <property type="match status" value="1"/>
</dbReference>
<dbReference type="HAMAP" id="MF_01394">
    <property type="entry name" value="NDH1_NuoA"/>
    <property type="match status" value="1"/>
</dbReference>
<dbReference type="InterPro" id="IPR023043">
    <property type="entry name" value="NAD(P)H_OxRDtase_bac/plastid"/>
</dbReference>
<dbReference type="InterPro" id="IPR000440">
    <property type="entry name" value="NADH_UbQ/plastoQ_OxRdtase_su3"/>
</dbReference>
<dbReference type="InterPro" id="IPR038430">
    <property type="entry name" value="NDAH_ubi_oxred_su3_sf"/>
</dbReference>
<dbReference type="PANTHER" id="PTHR11058">
    <property type="entry name" value="NADH-UBIQUINONE OXIDOREDUCTASE CHAIN 3"/>
    <property type="match status" value="1"/>
</dbReference>
<dbReference type="PANTHER" id="PTHR11058:SF9">
    <property type="entry name" value="NADH-UBIQUINONE OXIDOREDUCTASE CHAIN 3"/>
    <property type="match status" value="1"/>
</dbReference>
<dbReference type="Pfam" id="PF00507">
    <property type="entry name" value="Oxidored_q4"/>
    <property type="match status" value="1"/>
</dbReference>
<accession>Q09G41</accession>
<gene>
    <name evidence="1" type="primary">ndhC</name>
</gene>
<sequence>MFLLHEYDIFWAFLIISSVIPILAFLISGVLAPISEGPEKLSSYESGIEPMGDAWLQFRIRYYMFALVFVVFDVETVFLYPWAMSFDVLGVPVFIEALIFVLILIVGSVYAWRKGALEWS</sequence>
<organism>
    <name type="scientific">Platanus occidentalis</name>
    <name type="common">Sycamore</name>
    <name type="synonym">American plane tree</name>
    <dbReference type="NCBI Taxonomy" id="4403"/>
    <lineage>
        <taxon>Eukaryota</taxon>
        <taxon>Viridiplantae</taxon>
        <taxon>Streptophyta</taxon>
        <taxon>Embryophyta</taxon>
        <taxon>Tracheophyta</taxon>
        <taxon>Spermatophyta</taxon>
        <taxon>Magnoliopsida</taxon>
        <taxon>Proteales</taxon>
        <taxon>Platanaceae</taxon>
        <taxon>Platanus</taxon>
    </lineage>
</organism>
<proteinExistence type="inferred from homology"/>
<protein>
    <recommendedName>
        <fullName evidence="1">NAD(P)H-quinone oxidoreductase subunit 3, chloroplastic</fullName>
        <ecNumber evidence="1">7.1.1.-</ecNumber>
    </recommendedName>
    <alternativeName>
        <fullName evidence="1">NAD(P)H dehydrogenase subunit 3</fullName>
    </alternativeName>
    <alternativeName>
        <fullName evidence="1">NADH-plastoquinone oxidoreductase subunit 3</fullName>
    </alternativeName>
</protein>
<name>NU3C_PLAOC</name>
<reference key="1">
    <citation type="journal article" date="2006" name="BMC Plant Biol.">
        <title>Rapid and accurate pyrosequencing of angiosperm plastid genomes.</title>
        <authorList>
            <person name="Moore M.J."/>
            <person name="Dhingra A."/>
            <person name="Soltis P.S."/>
            <person name="Shaw R."/>
            <person name="Farmerie W.G."/>
            <person name="Folta K.M."/>
            <person name="Soltis D.E."/>
        </authorList>
    </citation>
    <scope>NUCLEOTIDE SEQUENCE [LARGE SCALE GENOMIC DNA]</scope>
</reference>
<keyword id="KW-0150">Chloroplast</keyword>
<keyword id="KW-0472">Membrane</keyword>
<keyword id="KW-0520">NAD</keyword>
<keyword id="KW-0521">NADP</keyword>
<keyword id="KW-0934">Plastid</keyword>
<keyword id="KW-0618">Plastoquinone</keyword>
<keyword id="KW-0874">Quinone</keyword>
<keyword id="KW-0793">Thylakoid</keyword>
<keyword id="KW-1278">Translocase</keyword>
<keyword id="KW-0812">Transmembrane</keyword>
<keyword id="KW-1133">Transmembrane helix</keyword>
<keyword id="KW-0813">Transport</keyword>
<evidence type="ECO:0000255" key="1">
    <source>
        <dbReference type="HAMAP-Rule" id="MF_01394"/>
    </source>
</evidence>